<protein>
    <recommendedName>
        <fullName evidence="1">Trehalose-6-phosphate synthase</fullName>
        <shortName evidence="1">TPS</shortName>
        <ecNumber evidence="1">2.4.1.15</ecNumber>
    </recommendedName>
    <alternativeName>
        <fullName evidence="1">Alpha,alpha-trehalose-phosphate synthase [UDP-forming]</fullName>
    </alternativeName>
    <alternativeName>
        <fullName evidence="1">Osmoregulatory trehalose synthesis protein A</fullName>
        <shortName evidence="1">OtsA</shortName>
    </alternativeName>
    <alternativeName>
        <fullName evidence="1">UDP-glucose-glucosephosphate glucosyltransferase</fullName>
    </alternativeName>
</protein>
<comment type="function">
    <text evidence="1">Probably involved in the osmoprotection via the biosynthesis of trehalose. Catalyzes the transfer of glucose from UDP-alpha-D-glucose (UDP-Glc) to D-glucose 6-phosphate (Glc-6-P) to form trehalose-6-phosphate. Acts with retention of the anomeric configuration of the UDP-sugar donor.</text>
</comment>
<comment type="catalytic activity">
    <reaction evidence="1">
        <text>D-glucose 6-phosphate + UDP-alpha-D-glucose = alpha,alpha-trehalose 6-phosphate + UDP + H(+)</text>
        <dbReference type="Rhea" id="RHEA:18889"/>
        <dbReference type="ChEBI" id="CHEBI:15378"/>
        <dbReference type="ChEBI" id="CHEBI:58223"/>
        <dbReference type="ChEBI" id="CHEBI:58429"/>
        <dbReference type="ChEBI" id="CHEBI:58885"/>
        <dbReference type="ChEBI" id="CHEBI:61548"/>
        <dbReference type="EC" id="2.4.1.15"/>
    </reaction>
</comment>
<comment type="pathway">
    <text evidence="1">Glycan biosynthesis; trehalose biosynthesis.</text>
</comment>
<comment type="subunit">
    <text evidence="1">Homotetramer.</text>
</comment>
<comment type="similarity">
    <text evidence="1">Belongs to the glycosyltransferase 20 family.</text>
</comment>
<comment type="sequence caution" evidence="2">
    <conflict type="erroneous initiation">
        <sequence resource="EMBL-CDS" id="ABV12197"/>
    </conflict>
</comment>
<organism>
    <name type="scientific">Citrobacter koseri (strain ATCC BAA-895 / CDC 4225-83 / SGSC4696)</name>
    <dbReference type="NCBI Taxonomy" id="290338"/>
    <lineage>
        <taxon>Bacteria</taxon>
        <taxon>Pseudomonadati</taxon>
        <taxon>Pseudomonadota</taxon>
        <taxon>Gammaproteobacteria</taxon>
        <taxon>Enterobacterales</taxon>
        <taxon>Enterobacteriaceae</taxon>
        <taxon>Citrobacter</taxon>
    </lineage>
</organism>
<evidence type="ECO:0000250" key="1">
    <source>
        <dbReference type="UniProtKB" id="P31677"/>
    </source>
</evidence>
<evidence type="ECO:0000305" key="2"/>
<accession>A8AFD4</accession>
<dbReference type="EC" id="2.4.1.15" evidence="1"/>
<dbReference type="EMBL" id="CP000822">
    <property type="protein sequence ID" value="ABV12197.1"/>
    <property type="status" value="ALT_INIT"/>
    <property type="molecule type" value="Genomic_DNA"/>
</dbReference>
<dbReference type="RefSeq" id="WP_024130244.1">
    <property type="nucleotide sequence ID" value="NC_009792.1"/>
</dbReference>
<dbReference type="SMR" id="A8AFD4"/>
<dbReference type="STRING" id="290338.CKO_01054"/>
<dbReference type="CAZy" id="GT20">
    <property type="family name" value="Glycosyltransferase Family 20"/>
</dbReference>
<dbReference type="GeneID" id="45135211"/>
<dbReference type="KEGG" id="cko:CKO_01054"/>
<dbReference type="HOGENOM" id="CLU_002351_7_1_6"/>
<dbReference type="OrthoDB" id="9815690at2"/>
<dbReference type="UniPathway" id="UPA00299"/>
<dbReference type="Proteomes" id="UP000008148">
    <property type="component" value="Chromosome"/>
</dbReference>
<dbReference type="GO" id="GO:0003825">
    <property type="term" value="F:alpha,alpha-trehalose-phosphate synthase (UDP-forming) activity"/>
    <property type="evidence" value="ECO:0007669"/>
    <property type="project" value="UniProtKB-EC"/>
</dbReference>
<dbReference type="GO" id="GO:0005992">
    <property type="term" value="P:trehalose biosynthetic process"/>
    <property type="evidence" value="ECO:0007669"/>
    <property type="project" value="UniProtKB-UniPathway"/>
</dbReference>
<dbReference type="CDD" id="cd03788">
    <property type="entry name" value="GT20_TPS"/>
    <property type="match status" value="1"/>
</dbReference>
<dbReference type="FunFam" id="3.40.50.2000:FF:000024">
    <property type="entry name" value="Trehalose-6-phosphate synthase"/>
    <property type="match status" value="1"/>
</dbReference>
<dbReference type="Gene3D" id="3.40.50.2000">
    <property type="entry name" value="Glycogen Phosphorylase B"/>
    <property type="match status" value="2"/>
</dbReference>
<dbReference type="InterPro" id="IPR001830">
    <property type="entry name" value="Glyco_trans_20"/>
</dbReference>
<dbReference type="InterPro" id="IPR012766">
    <property type="entry name" value="Trehalose_OtsA"/>
</dbReference>
<dbReference type="NCBIfam" id="NF007513">
    <property type="entry name" value="PRK10117.1"/>
    <property type="match status" value="1"/>
</dbReference>
<dbReference type="NCBIfam" id="TIGR02400">
    <property type="entry name" value="trehalose_OtsA"/>
    <property type="match status" value="1"/>
</dbReference>
<dbReference type="PANTHER" id="PTHR10788:SF106">
    <property type="entry name" value="BCDNA.GH08860"/>
    <property type="match status" value="1"/>
</dbReference>
<dbReference type="PANTHER" id="PTHR10788">
    <property type="entry name" value="TREHALOSE-6-PHOSPHATE SYNTHASE"/>
    <property type="match status" value="1"/>
</dbReference>
<dbReference type="Pfam" id="PF00982">
    <property type="entry name" value="Glyco_transf_20"/>
    <property type="match status" value="1"/>
</dbReference>
<dbReference type="SUPFAM" id="SSF53756">
    <property type="entry name" value="UDP-Glycosyltransferase/glycogen phosphorylase"/>
    <property type="match status" value="1"/>
</dbReference>
<reference key="1">
    <citation type="submission" date="2007-08" db="EMBL/GenBank/DDBJ databases">
        <authorList>
            <consortium name="The Citrobacter koseri Genome Sequencing Project"/>
            <person name="McClelland M."/>
            <person name="Sanderson E.K."/>
            <person name="Porwollik S."/>
            <person name="Spieth J."/>
            <person name="Clifton W.S."/>
            <person name="Latreille P."/>
            <person name="Courtney L."/>
            <person name="Wang C."/>
            <person name="Pepin K."/>
            <person name="Bhonagiri V."/>
            <person name="Nash W."/>
            <person name="Johnson M."/>
            <person name="Thiruvilangam P."/>
            <person name="Wilson R."/>
        </authorList>
    </citation>
    <scope>NUCLEOTIDE SEQUENCE [LARGE SCALE GENOMIC DNA]</scope>
    <source>
        <strain>ATCC BAA-895 / CDC 4225-83 / SGSC4696</strain>
    </source>
</reference>
<keyword id="KW-0328">Glycosyltransferase</keyword>
<keyword id="KW-1185">Reference proteome</keyword>
<keyword id="KW-0808">Transferase</keyword>
<sequence length="473" mass="53476">MGRLVVVSNRIAPPDNKGGAGGLAVGVLGALKAAGGLWFGWSGETGNEDKPLKKVTRGNMTWASFNLSEQDYEEYYCQFSNAVLWPAFHYRLDLVQFQRPAWEGYSRVNALLADKLLPLLKDDDIIWVHDYHLLPFASELRKRGVNNRIGFFLHIPFPTPEIFNALPPHDTLLEQLCDFDLLGFQTENDRLAFLDSLSSQTRVTTRGSKSHSAWGKSFRTEVYPIGIEPDEIAQQASGPLPPKLAQLKAELKNVQNIFSVERLDYSKGLPERFQAYEALLEKYPQHHGKIRYTQIAPTSRGEVQAYQDIRHQLETEAGRINGKYGQLGWTPLYYLNQHFDRKLLMKVFRYSDVGLVTPLRDGMNLVAKEFVAAQDPANPGVLVLSQFAGAANELTSALIVNPYDRDDVAVALHRALTMPLAERISRHAEMLETIIKNDINHWQQRFIRDLKDVAPRSAETLHRNKVATFPKLA</sequence>
<name>OTSA_CITK8</name>
<gene>
    <name evidence="1" type="primary">otsA</name>
    <name type="ordered locus">CKO_01054</name>
</gene>
<feature type="chain" id="PRO_0000348890" description="Trehalose-6-phosphate synthase">
    <location>
        <begin position="1"/>
        <end position="473"/>
    </location>
</feature>
<feature type="binding site" evidence="1">
    <location>
        <position position="10"/>
    </location>
    <ligand>
        <name>D-glucose 6-phosphate</name>
        <dbReference type="ChEBI" id="CHEBI:61548"/>
    </ligand>
</feature>
<feature type="binding site" evidence="1">
    <location>
        <begin position="21"/>
        <end position="22"/>
    </location>
    <ligand>
        <name>UDP-alpha-D-glucose</name>
        <dbReference type="ChEBI" id="CHEBI:58885"/>
    </ligand>
</feature>
<feature type="binding site" evidence="1">
    <location>
        <position position="76"/>
    </location>
    <ligand>
        <name>D-glucose 6-phosphate</name>
        <dbReference type="ChEBI" id="CHEBI:61548"/>
    </ligand>
</feature>
<feature type="binding site" evidence="1">
    <location>
        <position position="130"/>
    </location>
    <ligand>
        <name>D-glucose 6-phosphate</name>
        <dbReference type="ChEBI" id="CHEBI:61548"/>
    </ligand>
</feature>
<feature type="binding site" evidence="1">
    <location>
        <position position="262"/>
    </location>
    <ligand>
        <name>UDP-alpha-D-glucose</name>
        <dbReference type="ChEBI" id="CHEBI:58885"/>
    </ligand>
</feature>
<feature type="binding site" evidence="1">
    <location>
        <position position="267"/>
    </location>
    <ligand>
        <name>UDP-alpha-D-glucose</name>
        <dbReference type="ChEBI" id="CHEBI:58885"/>
    </ligand>
</feature>
<feature type="binding site" evidence="1">
    <location>
        <position position="300"/>
    </location>
    <ligand>
        <name>D-glucose 6-phosphate</name>
        <dbReference type="ChEBI" id="CHEBI:61548"/>
    </ligand>
</feature>
<feature type="binding site" evidence="1">
    <location>
        <position position="339"/>
    </location>
    <ligand>
        <name>UDP-alpha-D-glucose</name>
        <dbReference type="ChEBI" id="CHEBI:58885"/>
    </ligand>
</feature>
<feature type="binding site" evidence="1">
    <location>
        <begin position="365"/>
        <end position="369"/>
    </location>
    <ligand>
        <name>UDP-alpha-D-glucose</name>
        <dbReference type="ChEBI" id="CHEBI:58885"/>
    </ligand>
</feature>
<feature type="site" description="Involved in alpha anomer selectivity" evidence="1">
    <location>
        <position position="85"/>
    </location>
</feature>
<feature type="site" description="Involved in alpha anomer selectivity" evidence="1">
    <location>
        <position position="155"/>
    </location>
</feature>
<proteinExistence type="inferred from homology"/>